<accession>Q5BHD6</accession>
<accession>C8VRD8</accession>
<comment type="function">
    <text evidence="1">Probable helicase, member of the UBC2/RAD6 epistasis group. Functions with DNA repair protein RAD18 in error-free postreplication DNA repair. Involved in the maintenance of wild-type rates of instability of simple repetitive sequences such as poly(GT) repeats. Seems to be involved in maintaining a balance which acts in favor of error-prone non-homologous joining during DNA double-strand breaks repairs (By similarity).</text>
</comment>
<comment type="subcellular location">
    <subcellularLocation>
        <location evidence="1">Cytoplasm</location>
    </subcellularLocation>
    <subcellularLocation>
        <location evidence="1">Nucleus</location>
    </subcellularLocation>
</comment>
<comment type="similarity">
    <text evidence="6">Belongs to the SNF2/RAD54 helicase family.</text>
</comment>
<dbReference type="EC" id="3.6.4.-"/>
<dbReference type="EMBL" id="AACD01000002">
    <property type="protein sequence ID" value="EAA65363.1"/>
    <property type="molecule type" value="Genomic_DNA"/>
</dbReference>
<dbReference type="EMBL" id="BN001308">
    <property type="protein sequence ID" value="CBF90313.1"/>
    <property type="molecule type" value="Genomic_DNA"/>
</dbReference>
<dbReference type="RefSeq" id="XP_657648.1">
    <property type="nucleotide sequence ID" value="XM_652556.1"/>
</dbReference>
<dbReference type="SMR" id="Q5BHD6"/>
<dbReference type="FunCoup" id="Q5BHD6">
    <property type="interactions" value="1025"/>
</dbReference>
<dbReference type="STRING" id="227321.Q5BHD6"/>
<dbReference type="EnsemblFungi" id="CBF90313">
    <property type="protein sequence ID" value="CBF90313"/>
    <property type="gene ID" value="ANIA_00044"/>
</dbReference>
<dbReference type="KEGG" id="ani:ANIA_00044"/>
<dbReference type="VEuPathDB" id="FungiDB:AN0044"/>
<dbReference type="eggNOG" id="KOG1001">
    <property type="taxonomic scope" value="Eukaryota"/>
</dbReference>
<dbReference type="HOGENOM" id="CLU_000315_2_5_1"/>
<dbReference type="InParanoid" id="Q5BHD6"/>
<dbReference type="OMA" id="KVEPWSN"/>
<dbReference type="OrthoDB" id="2801544at2759"/>
<dbReference type="Proteomes" id="UP000000560">
    <property type="component" value="Chromosome VIII"/>
</dbReference>
<dbReference type="GO" id="GO:0005737">
    <property type="term" value="C:cytoplasm"/>
    <property type="evidence" value="ECO:0007669"/>
    <property type="project" value="UniProtKB-SubCell"/>
</dbReference>
<dbReference type="GO" id="GO:0005634">
    <property type="term" value="C:nucleus"/>
    <property type="evidence" value="ECO:0000318"/>
    <property type="project" value="GO_Central"/>
</dbReference>
<dbReference type="GO" id="GO:0005524">
    <property type="term" value="F:ATP binding"/>
    <property type="evidence" value="ECO:0007669"/>
    <property type="project" value="UniProtKB-KW"/>
</dbReference>
<dbReference type="GO" id="GO:0008094">
    <property type="term" value="F:ATP-dependent activity, acting on DNA"/>
    <property type="evidence" value="ECO:0000318"/>
    <property type="project" value="GO_Central"/>
</dbReference>
<dbReference type="GO" id="GO:0003677">
    <property type="term" value="F:DNA binding"/>
    <property type="evidence" value="ECO:0007669"/>
    <property type="project" value="UniProtKB-KW"/>
</dbReference>
<dbReference type="GO" id="GO:0004386">
    <property type="term" value="F:helicase activity"/>
    <property type="evidence" value="ECO:0007669"/>
    <property type="project" value="UniProtKB-KW"/>
</dbReference>
<dbReference type="GO" id="GO:0016818">
    <property type="term" value="F:hydrolase activity, acting on acid anhydrides, in phosphorus-containing anhydrides"/>
    <property type="evidence" value="ECO:0007669"/>
    <property type="project" value="InterPro"/>
</dbReference>
<dbReference type="GO" id="GO:0008270">
    <property type="term" value="F:zinc ion binding"/>
    <property type="evidence" value="ECO:0007669"/>
    <property type="project" value="UniProtKB-KW"/>
</dbReference>
<dbReference type="GO" id="GO:0006281">
    <property type="term" value="P:DNA repair"/>
    <property type="evidence" value="ECO:0000318"/>
    <property type="project" value="GO_Central"/>
</dbReference>
<dbReference type="CDD" id="cd18008">
    <property type="entry name" value="DEXDc_SHPRH-like"/>
    <property type="match status" value="1"/>
</dbReference>
<dbReference type="CDD" id="cd18793">
    <property type="entry name" value="SF2_C_SNF"/>
    <property type="match status" value="1"/>
</dbReference>
<dbReference type="Gene3D" id="3.40.50.300">
    <property type="entry name" value="P-loop containing nucleotide triphosphate hydrolases"/>
    <property type="match status" value="2"/>
</dbReference>
<dbReference type="Gene3D" id="3.40.50.10810">
    <property type="entry name" value="Tandem AAA-ATPase domain"/>
    <property type="match status" value="1"/>
</dbReference>
<dbReference type="Gene3D" id="3.30.40.10">
    <property type="entry name" value="Zinc/RING finger domain, C3HC4 (zinc finger)"/>
    <property type="match status" value="1"/>
</dbReference>
<dbReference type="InterPro" id="IPR014001">
    <property type="entry name" value="Helicase_ATP-bd"/>
</dbReference>
<dbReference type="InterPro" id="IPR001650">
    <property type="entry name" value="Helicase_C-like"/>
</dbReference>
<dbReference type="InterPro" id="IPR014905">
    <property type="entry name" value="HIRAN"/>
</dbReference>
<dbReference type="InterPro" id="IPR027417">
    <property type="entry name" value="P-loop_NTPase"/>
</dbReference>
<dbReference type="InterPro" id="IPR038718">
    <property type="entry name" value="SNF2-like_sf"/>
</dbReference>
<dbReference type="InterPro" id="IPR049730">
    <property type="entry name" value="SNF2/RAD54-like_C"/>
</dbReference>
<dbReference type="InterPro" id="IPR000330">
    <property type="entry name" value="SNF2_N"/>
</dbReference>
<dbReference type="InterPro" id="IPR050628">
    <property type="entry name" value="SNF2_RAD54_helicase_TF"/>
</dbReference>
<dbReference type="InterPro" id="IPR001841">
    <property type="entry name" value="Znf_RING"/>
</dbReference>
<dbReference type="InterPro" id="IPR013083">
    <property type="entry name" value="Znf_RING/FYVE/PHD"/>
</dbReference>
<dbReference type="PANTHER" id="PTHR45626:SF22">
    <property type="entry name" value="DNA REPAIR PROTEIN RAD5"/>
    <property type="match status" value="1"/>
</dbReference>
<dbReference type="PANTHER" id="PTHR45626">
    <property type="entry name" value="TRANSCRIPTION TERMINATION FACTOR 2-RELATED"/>
    <property type="match status" value="1"/>
</dbReference>
<dbReference type="Pfam" id="PF00271">
    <property type="entry name" value="Helicase_C"/>
    <property type="match status" value="2"/>
</dbReference>
<dbReference type="Pfam" id="PF08797">
    <property type="entry name" value="HIRAN"/>
    <property type="match status" value="1"/>
</dbReference>
<dbReference type="Pfam" id="PF00176">
    <property type="entry name" value="SNF2-rel_dom"/>
    <property type="match status" value="1"/>
</dbReference>
<dbReference type="Pfam" id="PF24975">
    <property type="entry name" value="UBA_Rad5"/>
    <property type="match status" value="1"/>
</dbReference>
<dbReference type="SMART" id="SM00487">
    <property type="entry name" value="DEXDc"/>
    <property type="match status" value="1"/>
</dbReference>
<dbReference type="SMART" id="SM00490">
    <property type="entry name" value="HELICc"/>
    <property type="match status" value="1"/>
</dbReference>
<dbReference type="SMART" id="SM00910">
    <property type="entry name" value="HIRAN"/>
    <property type="match status" value="1"/>
</dbReference>
<dbReference type="SMART" id="SM00184">
    <property type="entry name" value="RING"/>
    <property type="match status" value="1"/>
</dbReference>
<dbReference type="SUPFAM" id="SSF52540">
    <property type="entry name" value="P-loop containing nucleoside triphosphate hydrolases"/>
    <property type="match status" value="2"/>
</dbReference>
<dbReference type="SUPFAM" id="SSF57850">
    <property type="entry name" value="RING/U-box"/>
    <property type="match status" value="1"/>
</dbReference>
<dbReference type="PROSITE" id="PS51192">
    <property type="entry name" value="HELICASE_ATP_BIND_1"/>
    <property type="match status" value="1"/>
</dbReference>
<dbReference type="PROSITE" id="PS51194">
    <property type="entry name" value="HELICASE_CTER"/>
    <property type="match status" value="1"/>
</dbReference>
<dbReference type="PROSITE" id="PS50089">
    <property type="entry name" value="ZF_RING_2"/>
    <property type="match status" value="1"/>
</dbReference>
<proteinExistence type="inferred from homology"/>
<gene>
    <name type="primary">rad5</name>
    <name type="ORF">AN0044</name>
</gene>
<name>RAD5_EMENI</name>
<keyword id="KW-0067">ATP-binding</keyword>
<keyword id="KW-0963">Cytoplasm</keyword>
<keyword id="KW-0227">DNA damage</keyword>
<keyword id="KW-0234">DNA repair</keyword>
<keyword id="KW-0238">DNA-binding</keyword>
<keyword id="KW-0347">Helicase</keyword>
<keyword id="KW-0378">Hydrolase</keyword>
<keyword id="KW-0479">Metal-binding</keyword>
<keyword id="KW-0547">Nucleotide-binding</keyword>
<keyword id="KW-0539">Nucleus</keyword>
<keyword id="KW-1185">Reference proteome</keyword>
<keyword id="KW-0862">Zinc</keyword>
<keyword id="KW-0863">Zinc-finger</keyword>
<feature type="chain" id="PRO_0000056123" description="DNA repair protein rad5">
    <location>
        <begin position="1"/>
        <end position="1202"/>
    </location>
</feature>
<feature type="domain" description="Helicase ATP-binding" evidence="3">
    <location>
        <begin position="504"/>
        <end position="703"/>
    </location>
</feature>
<feature type="domain" description="Helicase C-terminal" evidence="4">
    <location>
        <begin position="1003"/>
        <end position="1198"/>
    </location>
</feature>
<feature type="zinc finger region" description="RING-type" evidence="2">
    <location>
        <begin position="892"/>
        <end position="937"/>
    </location>
</feature>
<feature type="region of interest" description="Disordered" evidence="5">
    <location>
        <begin position="1"/>
        <end position="90"/>
    </location>
</feature>
<feature type="region of interest" description="Disordered" evidence="5">
    <location>
        <begin position="137"/>
        <end position="187"/>
    </location>
</feature>
<feature type="region of interest" description="Disordered" evidence="5">
    <location>
        <begin position="382"/>
        <end position="403"/>
    </location>
</feature>
<feature type="region of interest" description="Disordered" evidence="5">
    <location>
        <begin position="952"/>
        <end position="981"/>
    </location>
</feature>
<feature type="region of interest" description="Disordered" evidence="5">
    <location>
        <begin position="1071"/>
        <end position="1097"/>
    </location>
</feature>
<feature type="short sequence motif" description="DEAH box">
    <location>
        <begin position="654"/>
        <end position="657"/>
    </location>
</feature>
<feature type="compositionally biased region" description="Basic and acidic residues" evidence="5">
    <location>
        <begin position="1"/>
        <end position="10"/>
    </location>
</feature>
<feature type="compositionally biased region" description="Polar residues" evidence="5">
    <location>
        <begin position="37"/>
        <end position="90"/>
    </location>
</feature>
<feature type="compositionally biased region" description="Polar residues" evidence="5">
    <location>
        <begin position="143"/>
        <end position="152"/>
    </location>
</feature>
<feature type="compositionally biased region" description="Polar residues" evidence="5">
    <location>
        <begin position="952"/>
        <end position="967"/>
    </location>
</feature>
<feature type="compositionally biased region" description="Polar residues" evidence="5">
    <location>
        <begin position="1074"/>
        <end position="1083"/>
    </location>
</feature>
<feature type="compositionally biased region" description="Low complexity" evidence="5">
    <location>
        <begin position="1084"/>
        <end position="1097"/>
    </location>
</feature>
<feature type="binding site" evidence="3">
    <location>
        <begin position="517"/>
        <end position="524"/>
    </location>
    <ligand>
        <name>ATP</name>
        <dbReference type="ChEBI" id="CHEBI:30616"/>
    </ligand>
</feature>
<reference key="1">
    <citation type="journal article" date="2005" name="Nature">
        <title>Sequencing of Aspergillus nidulans and comparative analysis with A. fumigatus and A. oryzae.</title>
        <authorList>
            <person name="Galagan J.E."/>
            <person name="Calvo S.E."/>
            <person name="Cuomo C."/>
            <person name="Ma L.-J."/>
            <person name="Wortman J.R."/>
            <person name="Batzoglou S."/>
            <person name="Lee S.-I."/>
            <person name="Bastuerkmen M."/>
            <person name="Spevak C.C."/>
            <person name="Clutterbuck J."/>
            <person name="Kapitonov V."/>
            <person name="Jurka J."/>
            <person name="Scazzocchio C."/>
            <person name="Farman M.L."/>
            <person name="Butler J."/>
            <person name="Purcell S."/>
            <person name="Harris S."/>
            <person name="Braus G.H."/>
            <person name="Draht O."/>
            <person name="Busch S."/>
            <person name="D'Enfert C."/>
            <person name="Bouchier C."/>
            <person name="Goldman G.H."/>
            <person name="Bell-Pedersen D."/>
            <person name="Griffiths-Jones S."/>
            <person name="Doonan J.H."/>
            <person name="Yu J."/>
            <person name="Vienken K."/>
            <person name="Pain A."/>
            <person name="Freitag M."/>
            <person name="Selker E.U."/>
            <person name="Archer D.B."/>
            <person name="Penalva M.A."/>
            <person name="Oakley B.R."/>
            <person name="Momany M."/>
            <person name="Tanaka T."/>
            <person name="Kumagai T."/>
            <person name="Asai K."/>
            <person name="Machida M."/>
            <person name="Nierman W.C."/>
            <person name="Denning D.W."/>
            <person name="Caddick M.X."/>
            <person name="Hynes M."/>
            <person name="Paoletti M."/>
            <person name="Fischer R."/>
            <person name="Miller B.L."/>
            <person name="Dyer P.S."/>
            <person name="Sachs M.S."/>
            <person name="Osmani S.A."/>
            <person name="Birren B.W."/>
        </authorList>
    </citation>
    <scope>NUCLEOTIDE SEQUENCE [LARGE SCALE GENOMIC DNA]</scope>
    <source>
        <strain>FGSC A4 / ATCC 38163 / CBS 112.46 / NRRL 194 / M139</strain>
    </source>
</reference>
<reference key="2">
    <citation type="journal article" date="2009" name="Fungal Genet. Biol.">
        <title>The 2008 update of the Aspergillus nidulans genome annotation: a community effort.</title>
        <authorList>
            <person name="Wortman J.R."/>
            <person name="Gilsenan J.M."/>
            <person name="Joardar V."/>
            <person name="Deegan J."/>
            <person name="Clutterbuck J."/>
            <person name="Andersen M.R."/>
            <person name="Archer D."/>
            <person name="Bencina M."/>
            <person name="Braus G."/>
            <person name="Coutinho P."/>
            <person name="von Dohren H."/>
            <person name="Doonan J."/>
            <person name="Driessen A.J."/>
            <person name="Durek P."/>
            <person name="Espeso E."/>
            <person name="Fekete E."/>
            <person name="Flipphi M."/>
            <person name="Estrada C.G."/>
            <person name="Geysens S."/>
            <person name="Goldman G."/>
            <person name="de Groot P.W."/>
            <person name="Hansen K."/>
            <person name="Harris S.D."/>
            <person name="Heinekamp T."/>
            <person name="Helmstaedt K."/>
            <person name="Henrissat B."/>
            <person name="Hofmann G."/>
            <person name="Homan T."/>
            <person name="Horio T."/>
            <person name="Horiuchi H."/>
            <person name="James S."/>
            <person name="Jones M."/>
            <person name="Karaffa L."/>
            <person name="Karanyi Z."/>
            <person name="Kato M."/>
            <person name="Keller N."/>
            <person name="Kelly D.E."/>
            <person name="Kiel J.A."/>
            <person name="Kim J.M."/>
            <person name="van der Klei I.J."/>
            <person name="Klis F.M."/>
            <person name="Kovalchuk A."/>
            <person name="Krasevec N."/>
            <person name="Kubicek C.P."/>
            <person name="Liu B."/>
            <person name="Maccabe A."/>
            <person name="Meyer V."/>
            <person name="Mirabito P."/>
            <person name="Miskei M."/>
            <person name="Mos M."/>
            <person name="Mullins J."/>
            <person name="Nelson D.R."/>
            <person name="Nielsen J."/>
            <person name="Oakley B.R."/>
            <person name="Osmani S.A."/>
            <person name="Pakula T."/>
            <person name="Paszewski A."/>
            <person name="Paulsen I."/>
            <person name="Pilsyk S."/>
            <person name="Pocsi I."/>
            <person name="Punt P.J."/>
            <person name="Ram A.F."/>
            <person name="Ren Q."/>
            <person name="Robellet X."/>
            <person name="Robson G."/>
            <person name="Seiboth B."/>
            <person name="van Solingen P."/>
            <person name="Specht T."/>
            <person name="Sun J."/>
            <person name="Taheri-Talesh N."/>
            <person name="Takeshita N."/>
            <person name="Ussery D."/>
            <person name="vanKuyk P.A."/>
            <person name="Visser H."/>
            <person name="van de Vondervoort P.J."/>
            <person name="de Vries R.P."/>
            <person name="Walton J."/>
            <person name="Xiang X."/>
            <person name="Xiong Y."/>
            <person name="Zeng A.P."/>
            <person name="Brandt B.W."/>
            <person name="Cornell M.J."/>
            <person name="van den Hondel C.A."/>
            <person name="Visser J."/>
            <person name="Oliver S.G."/>
            <person name="Turner G."/>
        </authorList>
    </citation>
    <scope>GENOME REANNOTATION</scope>
    <source>
        <strain>FGSC A4 / ATCC 38163 / CBS 112.46 / NRRL 194 / M139</strain>
    </source>
</reference>
<evidence type="ECO:0000250" key="1"/>
<evidence type="ECO:0000255" key="2">
    <source>
        <dbReference type="PROSITE-ProRule" id="PRU00175"/>
    </source>
</evidence>
<evidence type="ECO:0000255" key="3">
    <source>
        <dbReference type="PROSITE-ProRule" id="PRU00541"/>
    </source>
</evidence>
<evidence type="ECO:0000255" key="4">
    <source>
        <dbReference type="PROSITE-ProRule" id="PRU00542"/>
    </source>
</evidence>
<evidence type="ECO:0000256" key="5">
    <source>
        <dbReference type="SAM" id="MobiDB-lite"/>
    </source>
</evidence>
<evidence type="ECO:0000305" key="6"/>
<protein>
    <recommendedName>
        <fullName>DNA repair protein rad5</fullName>
        <ecNumber>3.6.4.-</ecNumber>
    </recommendedName>
</protein>
<organism>
    <name type="scientific">Emericella nidulans (strain FGSC A4 / ATCC 38163 / CBS 112.46 / NRRL 194 / M139)</name>
    <name type="common">Aspergillus nidulans</name>
    <dbReference type="NCBI Taxonomy" id="227321"/>
    <lineage>
        <taxon>Eukaryota</taxon>
        <taxon>Fungi</taxon>
        <taxon>Dikarya</taxon>
        <taxon>Ascomycota</taxon>
        <taxon>Pezizomycotina</taxon>
        <taxon>Eurotiomycetes</taxon>
        <taxon>Eurotiomycetidae</taxon>
        <taxon>Eurotiales</taxon>
        <taxon>Aspergillaceae</taxon>
        <taxon>Aspergillus</taxon>
        <taxon>Aspergillus subgen. Nidulantes</taxon>
    </lineage>
</organism>
<sequence length="1202" mass="133801">MNFDASNDRPLKKRRFFVDDPLDTAVTPAEKSPALDASSSASTHTDPNYSANGSPAQIQTQQEYNFSNGGHATQPATAAGTRTHQAQSPAHDTLSDFDTEAFVSIVGEQVSPETLSQIRKLSDGSLEKAINVYFDGSWKNAGSPGSSQTTLLSCERNASRPSPLHTSREQGTGPAENGADSVTEPISRSKLQPARRYLGAFGVEAWATRSGIGLIKHGDTVNIERARSQPLSTRGRTGKLRVNQKGDVLTRFTNTAGQEIGRLPRETAEWVSTLLDQKICEFRGVCVFAPDRLRVNDTIYLQLRCFMRIEAFQPKELPQKQDDNRATTIFEQEESAEEKQLRLRQVALVQLFDEIGLKSTTQDDEIKKQRKEGLLRAAEMADQEAKKLAKSGNTDSGDEEPAELEQDQLDALYKKAQSFDFSMPEAQPPSSFAMDLRKYQKQALYWMLSKEKDKKSGREVSIHPLWEEYDWPLKDVDDKDLPIIEGINHFYVNPYSGELSLDFPAQEQHCLGGILADEMGLGKTIEMLSLVHSHRNLPPTQSLGNLTRLPVSGVVPAPYTTLVVAPMSLLAQWEGEALKASRNGSMKVLMYYGNEKNVNLREMCSAGNAAAPNMILTSYGVVMSEHRTHQALAPGTSWTPGNLFSVDFFRVILDEAHIIKNRRSKTARACYDLKATHRWVLTGTPIVNRLEDLFSLVRFLRVEPWNNFSFWKTFITAPFESKEVVRAISVVQTVLEPLVLRRTKSMKTPEGEPLVPLPKRTIRIEKVELIEQEREIYNHIYTRAKQTFNSNVAAGTLLKSYSTIFAQLLRLRQTCCHPILTRNKAIVADEEDAAAAADQDSDLKDDMDLQELINRFTATTSDAESSNEPPDPSMKFTAHALRQIQTESAGECPICSEEPMIDPAVTACWHSACKGCLKDYIQHQRDKGVQPRCFSCRADLNPQDIFEVVRYQSPNTTPTEQTPSSIGGDNVYSSSQPPPPPRISLRRINPLSPSAHTSAKIHALLAHLVRVPAGTKSVVFSQFTSFLDLIGPQLTKAGISFVRLDGTMAQKARAEVLAQFTKFETFTQEELDQAESTSAPSGLTPTPKTPKQSSSPSSPTVLLISLKAGGVGLNLTAASNVFMMDPWWSFAIEAQAIDRVHRMGQLRDVNVVRFIVKDSIEERMLRVQERKMGIAGSLGLMGEGNEEERRKERIEELRLLFE</sequence>